<proteinExistence type="inferred from homology"/>
<protein>
    <recommendedName>
        <fullName evidence="1">Glucosamine-6-phosphate deaminase</fullName>
        <ecNumber evidence="1">3.5.99.6</ecNumber>
    </recommendedName>
    <alternativeName>
        <fullName evidence="1">GlcN6P deaminase</fullName>
        <shortName evidence="1">GNPDA</shortName>
    </alternativeName>
    <alternativeName>
        <fullName evidence="1">Glucosamine-6-phosphate isomerase</fullName>
    </alternativeName>
</protein>
<feature type="chain" id="PRO_1000139783" description="Glucosamine-6-phosphate deaminase">
    <location>
        <begin position="1"/>
        <end position="268"/>
    </location>
</feature>
<feature type="active site" description="Proton acceptor; for enolization step" evidence="1">
    <location>
        <position position="72"/>
    </location>
</feature>
<feature type="active site" description="For ring-opening step" evidence="1">
    <location>
        <position position="141"/>
    </location>
</feature>
<feature type="active site" description="Proton acceptor; for ring-opening step" evidence="1">
    <location>
        <position position="143"/>
    </location>
</feature>
<feature type="active site" description="For ring-opening step" evidence="1">
    <location>
        <position position="148"/>
    </location>
</feature>
<feature type="site" description="Part of the allosteric site" evidence="1">
    <location>
        <position position="151"/>
    </location>
</feature>
<feature type="site" description="Part of the allosteric site" evidence="1">
    <location>
        <position position="158"/>
    </location>
</feature>
<feature type="site" description="Part of the allosteric site" evidence="1">
    <location>
        <position position="160"/>
    </location>
</feature>
<feature type="site" description="Part of the allosteric site" evidence="1">
    <location>
        <position position="161"/>
    </location>
</feature>
<feature type="site" description="Part of the allosteric site" evidence="1">
    <location>
        <position position="254"/>
    </location>
</feature>
<sequence>MRLIPLSTAQQVGKWSANYIVEKINAFAPSADRPFVLGLPTGGTPLATYKALIELHRAGKVSFQHVVTFNMDEYVGIPADHPQSYRTFMYENFFNHIDIKDENINLLNGNATDPQAECARYEAKIKSYGKINLFMGGVGNDGHIAFNEPASSLASRTRMKTLTEDTRLANSRFFDNDINKVPKYALTVGVGTLLDAEELMILATGINKAQAVQVATEGAVNHLWTISCVQLHPKAILVCDDPATMELRVKTLRYFQQIEAQERQQYQD</sequence>
<organism>
    <name type="scientific">Proteus mirabilis (strain HI4320)</name>
    <dbReference type="NCBI Taxonomy" id="529507"/>
    <lineage>
        <taxon>Bacteria</taxon>
        <taxon>Pseudomonadati</taxon>
        <taxon>Pseudomonadota</taxon>
        <taxon>Gammaproteobacteria</taxon>
        <taxon>Enterobacterales</taxon>
        <taxon>Morganellaceae</taxon>
        <taxon>Proteus</taxon>
    </lineage>
</organism>
<keyword id="KW-0021">Allosteric enzyme</keyword>
<keyword id="KW-0119">Carbohydrate metabolism</keyword>
<keyword id="KW-0378">Hydrolase</keyword>
<keyword id="KW-1185">Reference proteome</keyword>
<comment type="function">
    <text evidence="1">Catalyzes the reversible isomerization-deamination of glucosamine 6-phosphate (GlcN6P) to form fructose 6-phosphate (Fru6P) and ammonium ion.</text>
</comment>
<comment type="catalytic activity">
    <reaction evidence="1">
        <text>alpha-D-glucosamine 6-phosphate + H2O = beta-D-fructose 6-phosphate + NH4(+)</text>
        <dbReference type="Rhea" id="RHEA:12172"/>
        <dbReference type="ChEBI" id="CHEBI:15377"/>
        <dbReference type="ChEBI" id="CHEBI:28938"/>
        <dbReference type="ChEBI" id="CHEBI:57634"/>
        <dbReference type="ChEBI" id="CHEBI:75989"/>
        <dbReference type="EC" id="3.5.99.6"/>
    </reaction>
</comment>
<comment type="activity regulation">
    <text evidence="1">Allosterically activated by N-acetylglucosamine 6-phosphate (GlcNAc6P).</text>
</comment>
<comment type="pathway">
    <text evidence="1">Amino-sugar metabolism; N-acetylneuraminate degradation; D-fructose 6-phosphate from N-acetylneuraminate: step 5/5.</text>
</comment>
<comment type="subunit">
    <text evidence="1">Homohexamer.</text>
</comment>
<comment type="similarity">
    <text evidence="1">Belongs to the glucosamine/galactosamine-6-phosphate isomerase family. NagB subfamily.</text>
</comment>
<reference key="1">
    <citation type="journal article" date="2008" name="J. Bacteriol.">
        <title>Complete genome sequence of uropathogenic Proteus mirabilis, a master of both adherence and motility.</title>
        <authorList>
            <person name="Pearson M.M."/>
            <person name="Sebaihia M."/>
            <person name="Churcher C."/>
            <person name="Quail M.A."/>
            <person name="Seshasayee A.S."/>
            <person name="Luscombe N.M."/>
            <person name="Abdellah Z."/>
            <person name="Arrosmith C."/>
            <person name="Atkin B."/>
            <person name="Chillingworth T."/>
            <person name="Hauser H."/>
            <person name="Jagels K."/>
            <person name="Moule S."/>
            <person name="Mungall K."/>
            <person name="Norbertczak H."/>
            <person name="Rabbinowitsch E."/>
            <person name="Walker D."/>
            <person name="Whithead S."/>
            <person name="Thomson N.R."/>
            <person name="Rather P.N."/>
            <person name="Parkhill J."/>
            <person name="Mobley H.L.T."/>
        </authorList>
    </citation>
    <scope>NUCLEOTIDE SEQUENCE [LARGE SCALE GENOMIC DNA]</scope>
    <source>
        <strain>HI4320</strain>
    </source>
</reference>
<gene>
    <name evidence="1" type="primary">nagB</name>
    <name type="ordered locus">PMI0454</name>
</gene>
<accession>B4ESJ0</accession>
<evidence type="ECO:0000255" key="1">
    <source>
        <dbReference type="HAMAP-Rule" id="MF_01241"/>
    </source>
</evidence>
<name>NAGB_PROMH</name>
<dbReference type="EC" id="3.5.99.6" evidence="1"/>
<dbReference type="EMBL" id="AM942759">
    <property type="protein sequence ID" value="CAR41133.1"/>
    <property type="molecule type" value="Genomic_DNA"/>
</dbReference>
<dbReference type="RefSeq" id="WP_004247451.1">
    <property type="nucleotide sequence ID" value="NC_010554.1"/>
</dbReference>
<dbReference type="SMR" id="B4ESJ0"/>
<dbReference type="EnsemblBacteria" id="CAR41133">
    <property type="protein sequence ID" value="CAR41133"/>
    <property type="gene ID" value="PMI0454"/>
</dbReference>
<dbReference type="GeneID" id="6800484"/>
<dbReference type="KEGG" id="pmr:PMI0454"/>
<dbReference type="eggNOG" id="COG0363">
    <property type="taxonomic scope" value="Bacteria"/>
</dbReference>
<dbReference type="HOGENOM" id="CLU_049611_0_1_6"/>
<dbReference type="UniPathway" id="UPA00629">
    <property type="reaction ID" value="UER00684"/>
</dbReference>
<dbReference type="Proteomes" id="UP000008319">
    <property type="component" value="Chromosome"/>
</dbReference>
<dbReference type="GO" id="GO:0005737">
    <property type="term" value="C:cytoplasm"/>
    <property type="evidence" value="ECO:0007669"/>
    <property type="project" value="TreeGrafter"/>
</dbReference>
<dbReference type="GO" id="GO:0004342">
    <property type="term" value="F:glucosamine-6-phosphate deaminase activity"/>
    <property type="evidence" value="ECO:0007669"/>
    <property type="project" value="UniProtKB-UniRule"/>
</dbReference>
<dbReference type="GO" id="GO:0042802">
    <property type="term" value="F:identical protein binding"/>
    <property type="evidence" value="ECO:0007669"/>
    <property type="project" value="TreeGrafter"/>
</dbReference>
<dbReference type="GO" id="GO:0005975">
    <property type="term" value="P:carbohydrate metabolic process"/>
    <property type="evidence" value="ECO:0007669"/>
    <property type="project" value="InterPro"/>
</dbReference>
<dbReference type="GO" id="GO:0006043">
    <property type="term" value="P:glucosamine catabolic process"/>
    <property type="evidence" value="ECO:0007669"/>
    <property type="project" value="TreeGrafter"/>
</dbReference>
<dbReference type="GO" id="GO:0006046">
    <property type="term" value="P:N-acetylglucosamine catabolic process"/>
    <property type="evidence" value="ECO:0007669"/>
    <property type="project" value="TreeGrafter"/>
</dbReference>
<dbReference type="GO" id="GO:0019262">
    <property type="term" value="P:N-acetylneuraminate catabolic process"/>
    <property type="evidence" value="ECO:0007669"/>
    <property type="project" value="UniProtKB-UniRule"/>
</dbReference>
<dbReference type="CDD" id="cd01399">
    <property type="entry name" value="GlcN6P_deaminase"/>
    <property type="match status" value="1"/>
</dbReference>
<dbReference type="FunFam" id="3.40.50.1360:FF:000002">
    <property type="entry name" value="Glucosamine-6-phosphate deaminase"/>
    <property type="match status" value="1"/>
</dbReference>
<dbReference type="Gene3D" id="3.40.50.1360">
    <property type="match status" value="1"/>
</dbReference>
<dbReference type="HAMAP" id="MF_01241">
    <property type="entry name" value="GlcN6P_deamin"/>
    <property type="match status" value="1"/>
</dbReference>
<dbReference type="InterPro" id="IPR006148">
    <property type="entry name" value="Glc/Gal-6P_isomerase"/>
</dbReference>
<dbReference type="InterPro" id="IPR004547">
    <property type="entry name" value="Glucosamine6P_isomerase"/>
</dbReference>
<dbReference type="InterPro" id="IPR018321">
    <property type="entry name" value="Glucosamine6P_isomerase_CS"/>
</dbReference>
<dbReference type="InterPro" id="IPR037171">
    <property type="entry name" value="NagB/RpiA_transferase-like"/>
</dbReference>
<dbReference type="NCBIfam" id="TIGR00502">
    <property type="entry name" value="nagB"/>
    <property type="match status" value="1"/>
</dbReference>
<dbReference type="PANTHER" id="PTHR11280">
    <property type="entry name" value="GLUCOSAMINE-6-PHOSPHATE ISOMERASE"/>
    <property type="match status" value="1"/>
</dbReference>
<dbReference type="PANTHER" id="PTHR11280:SF5">
    <property type="entry name" value="GLUCOSAMINE-6-PHOSPHATE ISOMERASE"/>
    <property type="match status" value="1"/>
</dbReference>
<dbReference type="Pfam" id="PF01182">
    <property type="entry name" value="Glucosamine_iso"/>
    <property type="match status" value="1"/>
</dbReference>
<dbReference type="SUPFAM" id="SSF100950">
    <property type="entry name" value="NagB/RpiA/CoA transferase-like"/>
    <property type="match status" value="1"/>
</dbReference>
<dbReference type="PROSITE" id="PS01161">
    <property type="entry name" value="GLC_GALNAC_ISOMERASE"/>
    <property type="match status" value="1"/>
</dbReference>